<proteinExistence type="inferred from homology"/>
<gene>
    <name evidence="1" type="primary">clpX</name>
    <name type="ordered locus">NWMN_1568</name>
</gene>
<comment type="function">
    <text evidence="1">ATP-dependent specificity component of the Clp protease. It directs the protease to specific substrates. Can perform chaperone functions in the absence of ClpP.</text>
</comment>
<comment type="subunit">
    <text evidence="1">Component of the ClpX-ClpP complex. Forms a hexameric ring that, in the presence of ATP, binds to fourteen ClpP subunits assembled into a disk-like structure with a central cavity, resembling the structure of eukaryotic proteasomes.</text>
</comment>
<comment type="similarity">
    <text evidence="1">Belongs to the ClpX chaperone family.</text>
</comment>
<sequence>MFKFNEDEENLKCSFCGKDQDQVKKLVAGSGVYICNECIELCSEIVEEELAQNTSEAMTELPTPKEIMDHLNEYVIGQEKAKKSLAVAVYNHYKRIQQLGPKEDDVELQKSNIALIGPTGSGKTLLAQTLAKTLNVPFAIADATSLTEAGYVGDDVENILLRLIQAADFDIDKAEKGIIYVDEIDKIARKSENTSITRDVSGEGVQQALLKILEGTTASVPPQGGRKHPNQEMIQIDTTNILFILGGAFDGIEEVIKRRLGEKVIGFSSNEADKYDEQALLAQIRPEDLQAYGLIPEFIGRVPIVANLETLDVTALKNILTQPKNALVKQYTKMLELDDVDLEFTEEALSAISEKAIERKTGARGLRSIIEESLIDIMFDVPSNENVTKVVITAQTINEETEPELYDAEGNLINNSKTSA</sequence>
<keyword id="KW-0067">ATP-binding</keyword>
<keyword id="KW-0143">Chaperone</keyword>
<keyword id="KW-0479">Metal-binding</keyword>
<keyword id="KW-0547">Nucleotide-binding</keyword>
<keyword id="KW-0862">Zinc</keyword>
<dbReference type="EMBL" id="AP009351">
    <property type="protein sequence ID" value="BAF67840.1"/>
    <property type="molecule type" value="Genomic_DNA"/>
</dbReference>
<dbReference type="RefSeq" id="WP_000472302.1">
    <property type="nucleotide sequence ID" value="NZ_JBBIAE010000001.1"/>
</dbReference>
<dbReference type="SMR" id="A6QHK8"/>
<dbReference type="KEGG" id="sae:NWMN_1568"/>
<dbReference type="HOGENOM" id="CLU_014218_8_2_9"/>
<dbReference type="PHI-base" id="PHI:3004"/>
<dbReference type="Proteomes" id="UP000006386">
    <property type="component" value="Chromosome"/>
</dbReference>
<dbReference type="GO" id="GO:0009376">
    <property type="term" value="C:HslUV protease complex"/>
    <property type="evidence" value="ECO:0007669"/>
    <property type="project" value="TreeGrafter"/>
</dbReference>
<dbReference type="GO" id="GO:0005524">
    <property type="term" value="F:ATP binding"/>
    <property type="evidence" value="ECO:0007669"/>
    <property type="project" value="UniProtKB-UniRule"/>
</dbReference>
<dbReference type="GO" id="GO:0016887">
    <property type="term" value="F:ATP hydrolysis activity"/>
    <property type="evidence" value="ECO:0007669"/>
    <property type="project" value="InterPro"/>
</dbReference>
<dbReference type="GO" id="GO:0140662">
    <property type="term" value="F:ATP-dependent protein folding chaperone"/>
    <property type="evidence" value="ECO:0007669"/>
    <property type="project" value="InterPro"/>
</dbReference>
<dbReference type="GO" id="GO:0046983">
    <property type="term" value="F:protein dimerization activity"/>
    <property type="evidence" value="ECO:0007669"/>
    <property type="project" value="InterPro"/>
</dbReference>
<dbReference type="GO" id="GO:0051082">
    <property type="term" value="F:unfolded protein binding"/>
    <property type="evidence" value="ECO:0007669"/>
    <property type="project" value="UniProtKB-UniRule"/>
</dbReference>
<dbReference type="GO" id="GO:0008270">
    <property type="term" value="F:zinc ion binding"/>
    <property type="evidence" value="ECO:0007669"/>
    <property type="project" value="InterPro"/>
</dbReference>
<dbReference type="GO" id="GO:0051301">
    <property type="term" value="P:cell division"/>
    <property type="evidence" value="ECO:0007669"/>
    <property type="project" value="TreeGrafter"/>
</dbReference>
<dbReference type="GO" id="GO:0051603">
    <property type="term" value="P:proteolysis involved in protein catabolic process"/>
    <property type="evidence" value="ECO:0007669"/>
    <property type="project" value="TreeGrafter"/>
</dbReference>
<dbReference type="CDD" id="cd19497">
    <property type="entry name" value="RecA-like_ClpX"/>
    <property type="match status" value="1"/>
</dbReference>
<dbReference type="FunFam" id="1.10.8.60:FF:000002">
    <property type="entry name" value="ATP-dependent Clp protease ATP-binding subunit ClpX"/>
    <property type="match status" value="1"/>
</dbReference>
<dbReference type="FunFam" id="3.40.50.300:FF:000005">
    <property type="entry name" value="ATP-dependent Clp protease ATP-binding subunit ClpX"/>
    <property type="match status" value="1"/>
</dbReference>
<dbReference type="Gene3D" id="1.10.8.60">
    <property type="match status" value="1"/>
</dbReference>
<dbReference type="Gene3D" id="6.20.220.10">
    <property type="entry name" value="ClpX chaperone, C4-type zinc finger domain"/>
    <property type="match status" value="1"/>
</dbReference>
<dbReference type="Gene3D" id="3.40.50.300">
    <property type="entry name" value="P-loop containing nucleotide triphosphate hydrolases"/>
    <property type="match status" value="1"/>
</dbReference>
<dbReference type="HAMAP" id="MF_00175">
    <property type="entry name" value="ClpX"/>
    <property type="match status" value="1"/>
</dbReference>
<dbReference type="InterPro" id="IPR003593">
    <property type="entry name" value="AAA+_ATPase"/>
</dbReference>
<dbReference type="InterPro" id="IPR050052">
    <property type="entry name" value="ATP-dep_Clp_protease_ClpX"/>
</dbReference>
<dbReference type="InterPro" id="IPR003959">
    <property type="entry name" value="ATPase_AAA_core"/>
</dbReference>
<dbReference type="InterPro" id="IPR019489">
    <property type="entry name" value="Clp_ATPase_C"/>
</dbReference>
<dbReference type="InterPro" id="IPR004487">
    <property type="entry name" value="Clp_protease_ATP-bd_su_ClpX"/>
</dbReference>
<dbReference type="InterPro" id="IPR046425">
    <property type="entry name" value="ClpX_bact"/>
</dbReference>
<dbReference type="InterPro" id="IPR027417">
    <property type="entry name" value="P-loop_NTPase"/>
</dbReference>
<dbReference type="InterPro" id="IPR010603">
    <property type="entry name" value="Znf_CppX_C4"/>
</dbReference>
<dbReference type="InterPro" id="IPR038366">
    <property type="entry name" value="Znf_CppX_C4_sf"/>
</dbReference>
<dbReference type="NCBIfam" id="TIGR00382">
    <property type="entry name" value="clpX"/>
    <property type="match status" value="1"/>
</dbReference>
<dbReference type="NCBIfam" id="NF003745">
    <property type="entry name" value="PRK05342.1"/>
    <property type="match status" value="1"/>
</dbReference>
<dbReference type="PANTHER" id="PTHR48102:SF7">
    <property type="entry name" value="ATP-DEPENDENT CLP PROTEASE ATP-BINDING SUBUNIT CLPX-LIKE, MITOCHONDRIAL"/>
    <property type="match status" value="1"/>
</dbReference>
<dbReference type="PANTHER" id="PTHR48102">
    <property type="entry name" value="ATP-DEPENDENT CLP PROTEASE ATP-BINDING SUBUNIT CLPX-LIKE, MITOCHONDRIAL-RELATED"/>
    <property type="match status" value="1"/>
</dbReference>
<dbReference type="Pfam" id="PF07724">
    <property type="entry name" value="AAA_2"/>
    <property type="match status" value="1"/>
</dbReference>
<dbReference type="Pfam" id="PF10431">
    <property type="entry name" value="ClpB_D2-small"/>
    <property type="match status" value="1"/>
</dbReference>
<dbReference type="Pfam" id="PF06689">
    <property type="entry name" value="zf-C4_ClpX"/>
    <property type="match status" value="1"/>
</dbReference>
<dbReference type="SMART" id="SM00382">
    <property type="entry name" value="AAA"/>
    <property type="match status" value="1"/>
</dbReference>
<dbReference type="SMART" id="SM01086">
    <property type="entry name" value="ClpB_D2-small"/>
    <property type="match status" value="1"/>
</dbReference>
<dbReference type="SMART" id="SM00994">
    <property type="entry name" value="zf-C4_ClpX"/>
    <property type="match status" value="1"/>
</dbReference>
<dbReference type="SUPFAM" id="SSF57716">
    <property type="entry name" value="Glucocorticoid receptor-like (DNA-binding domain)"/>
    <property type="match status" value="1"/>
</dbReference>
<dbReference type="SUPFAM" id="SSF52540">
    <property type="entry name" value="P-loop containing nucleoside triphosphate hydrolases"/>
    <property type="match status" value="1"/>
</dbReference>
<dbReference type="PROSITE" id="PS51902">
    <property type="entry name" value="CLPX_ZB"/>
    <property type="match status" value="1"/>
</dbReference>
<feature type="chain" id="PRO_1000071628" description="ATP-dependent Clp protease ATP-binding subunit ClpX">
    <location>
        <begin position="1"/>
        <end position="420"/>
    </location>
</feature>
<feature type="domain" description="ClpX-type ZB" evidence="2">
    <location>
        <begin position="1"/>
        <end position="54"/>
    </location>
</feature>
<feature type="binding site" evidence="2">
    <location>
        <position position="13"/>
    </location>
    <ligand>
        <name>Zn(2+)</name>
        <dbReference type="ChEBI" id="CHEBI:29105"/>
    </ligand>
</feature>
<feature type="binding site" evidence="2">
    <location>
        <position position="16"/>
    </location>
    <ligand>
        <name>Zn(2+)</name>
        <dbReference type="ChEBI" id="CHEBI:29105"/>
    </ligand>
</feature>
<feature type="binding site" evidence="2">
    <location>
        <position position="35"/>
    </location>
    <ligand>
        <name>Zn(2+)</name>
        <dbReference type="ChEBI" id="CHEBI:29105"/>
    </ligand>
</feature>
<feature type="binding site" evidence="2">
    <location>
        <position position="38"/>
    </location>
    <ligand>
        <name>Zn(2+)</name>
        <dbReference type="ChEBI" id="CHEBI:29105"/>
    </ligand>
</feature>
<feature type="binding site" evidence="1">
    <location>
        <begin position="118"/>
        <end position="125"/>
    </location>
    <ligand>
        <name>ATP</name>
        <dbReference type="ChEBI" id="CHEBI:30616"/>
    </ligand>
</feature>
<organism>
    <name type="scientific">Staphylococcus aureus (strain Newman)</name>
    <dbReference type="NCBI Taxonomy" id="426430"/>
    <lineage>
        <taxon>Bacteria</taxon>
        <taxon>Bacillati</taxon>
        <taxon>Bacillota</taxon>
        <taxon>Bacilli</taxon>
        <taxon>Bacillales</taxon>
        <taxon>Staphylococcaceae</taxon>
        <taxon>Staphylococcus</taxon>
    </lineage>
</organism>
<reference key="1">
    <citation type="journal article" date="2008" name="J. Bacteriol.">
        <title>Genome sequence of Staphylococcus aureus strain Newman and comparative analysis of staphylococcal genomes: polymorphism and evolution of two major pathogenicity islands.</title>
        <authorList>
            <person name="Baba T."/>
            <person name="Bae T."/>
            <person name="Schneewind O."/>
            <person name="Takeuchi F."/>
            <person name="Hiramatsu K."/>
        </authorList>
    </citation>
    <scope>NUCLEOTIDE SEQUENCE [LARGE SCALE GENOMIC DNA]</scope>
    <source>
        <strain>Newman</strain>
    </source>
</reference>
<accession>A6QHK8</accession>
<protein>
    <recommendedName>
        <fullName evidence="1">ATP-dependent Clp protease ATP-binding subunit ClpX</fullName>
    </recommendedName>
</protein>
<name>CLPX_STAAE</name>
<evidence type="ECO:0000255" key="1">
    <source>
        <dbReference type="HAMAP-Rule" id="MF_00175"/>
    </source>
</evidence>
<evidence type="ECO:0000255" key="2">
    <source>
        <dbReference type="PROSITE-ProRule" id="PRU01250"/>
    </source>
</evidence>